<protein>
    <recommendedName>
        <fullName>Mothers against decapentaplegic homolog 2</fullName>
        <shortName>MAD homolog 2</shortName>
        <shortName>Mothers against DPP homolog 2</shortName>
    </recommendedName>
    <alternativeName>
        <fullName>Mad-related protein 2</fullName>
    </alternativeName>
    <alternativeName>
        <fullName>SMAD family member 2</fullName>
        <shortName>SMAD 2</shortName>
        <shortName>Smad2</shortName>
    </alternativeName>
</protein>
<feature type="initiator methionine" description="Removed" evidence="2">
    <location>
        <position position="1"/>
    </location>
</feature>
<feature type="chain" id="PRO_0000090854" description="Mothers against decapentaplegic homolog 2">
    <location>
        <begin position="2"/>
        <end position="467"/>
    </location>
</feature>
<feature type="domain" description="MH1" evidence="4">
    <location>
        <begin position="10"/>
        <end position="176"/>
    </location>
</feature>
<feature type="domain" description="MH2" evidence="5">
    <location>
        <begin position="274"/>
        <end position="467"/>
    </location>
</feature>
<feature type="region of interest" description="Disordered" evidence="6">
    <location>
        <begin position="207"/>
        <end position="251"/>
    </location>
</feature>
<feature type="short sequence motif" description="PY-motif" evidence="1">
    <location>
        <begin position="221"/>
        <end position="225"/>
    </location>
</feature>
<feature type="compositionally biased region" description="Polar residues" evidence="6">
    <location>
        <begin position="207"/>
        <end position="217"/>
    </location>
</feature>
<feature type="compositionally biased region" description="Polar residues" evidence="6">
    <location>
        <begin position="233"/>
        <end position="243"/>
    </location>
</feature>
<feature type="binding site" evidence="1">
    <location>
        <position position="74"/>
    </location>
    <ligand>
        <name>Zn(2+)</name>
        <dbReference type="ChEBI" id="CHEBI:29105"/>
    </ligand>
</feature>
<feature type="binding site" evidence="1">
    <location>
        <position position="149"/>
    </location>
    <ligand>
        <name>Zn(2+)</name>
        <dbReference type="ChEBI" id="CHEBI:29105"/>
    </ligand>
</feature>
<feature type="binding site" evidence="1">
    <location>
        <position position="161"/>
    </location>
    <ligand>
        <name>Zn(2+)</name>
        <dbReference type="ChEBI" id="CHEBI:29105"/>
    </ligand>
</feature>
<feature type="binding site" evidence="1">
    <location>
        <position position="166"/>
    </location>
    <ligand>
        <name>Zn(2+)</name>
        <dbReference type="ChEBI" id="CHEBI:29105"/>
    </ligand>
</feature>
<feature type="modified residue" description="N-acetylserine" evidence="2">
    <location>
        <position position="2"/>
    </location>
</feature>
<feature type="modified residue" description="Phosphothreonine" evidence="2">
    <location>
        <position position="8"/>
    </location>
</feature>
<feature type="modified residue" description="N6-acetyllysine" evidence="2">
    <location>
        <position position="19"/>
    </location>
</feature>
<feature type="modified residue" description="Phosphothreonine" evidence="2">
    <location>
        <position position="220"/>
    </location>
</feature>
<feature type="modified residue" description="Phosphoserine; by CAMK2" evidence="2 5">
    <location>
        <position position="240"/>
    </location>
</feature>
<feature type="modified residue" description="Phosphoserine" evidence="2">
    <location>
        <position position="245"/>
    </location>
</feature>
<feature type="modified residue" description="Phosphoserine" evidence="2">
    <location>
        <position position="250"/>
    </location>
</feature>
<feature type="modified residue" description="Phosphoserine" evidence="2">
    <location>
        <position position="255"/>
    </location>
</feature>
<feature type="modified residue" description="Phosphoserine" evidence="2 5">
    <location>
        <position position="458"/>
    </location>
</feature>
<feature type="modified residue" description="Phosphoserine" evidence="2 5">
    <location>
        <position position="460"/>
    </location>
</feature>
<feature type="modified residue" description="Phosphoserine" evidence="2 5">
    <location>
        <position position="464"/>
    </location>
</feature>
<feature type="modified residue" description="Phosphoserine; by TGFBR1" evidence="2 5">
    <location>
        <position position="465"/>
    </location>
</feature>
<feature type="modified residue" description="Phosphoserine; by TGFBR1" evidence="2 5">
    <location>
        <position position="467"/>
    </location>
</feature>
<comment type="function">
    <text evidence="2 3">Receptor-regulated SMAD (R-SMAD) that is an intracellular signal transducer and transcriptional modulator activated by TGF-beta (transforming growth factor) and activin type 1 receptor kinases. Binds the TRE element in the promoter region of many genes that are regulated by TGF-beta and, on formation of the SMAD2/SMAD4 complex, activates transcription. Promotes TGFB1-mediated transcription of odontoblastic differentiation genes in dental papilla cells (By similarity). Positively regulates PDPK1 kinase activity by stimulating its dissociation from the 14-3-3 protein YWHAQ which acts as a negative regulator (By similarity).</text>
</comment>
<comment type="subunit">
    <text evidence="2 3">Monomer; in the absence of TGF-beta (By similarity). Heterodimer; in the presence of TGF-beta (By similarity). Forms a heterodimer with co-SMAD, SMAD4, in the nucleus to form the transactivation complex SMAD2/SMAD4 (By similarity). Found in a complex with SMAD3 and TRIM33 upon addition of TGF-beta (By similarity). Identified in a complex that contains at least ZNF451, SMAD2, SMAD3 and SMAD4 (By similarity). Interacts (via the MH2 domain) with ZFYVE9; may form trimers with the SMAD4 co-SMAD (By similarity). Interacts with TAZ/WWRT1 (By similarity). Interacts with FOXH1 (By similarity). Interacts with SNW1 (By similarity). Interacts with CREB-binding protein (CBP) and EP300 (By similarity). Interacts with SNON (By similarity). Interacts with ALK4/ACVR1B (By similarity). Interacts with SKOR1 (By similarity). Interacts with SKOR2 (By similarity). Interacts with PRDM16 (By similarity). Interacts (via MH2 domain) with LEMD3 (By similarity). Interacts with RBPMS (By similarity). Interacts with WWP1. Interacts (dephosphorylated form, via the MH1 and MH2 domains) with RANBP3 (via its C-terminal R domain); the interaction results in the export of dephosphorylated SMAD3 out of the nucleus and termination of the TGF-beta signaling (By similarity). Interacts with PDPK1 (via PH domain) (By similarity). Interacts with DAB2; the interactions are enhanced upon TGF-beta stimulation (By similarity). Interacts with USP15 (By similarity). Interacts with PPP5C (By similarity). Interacts with LDLRAD4 (via the SMAD interaction motif) (By similarity). Interacts (via MH2 domain) with PMEPA1 (via the SMAD interaction motif) (By similarity). Interacts with ZFHX3 (By similarity). Interacts with ZNF451 (By similarity). Interacts with SMURF2 when phosphorylated on Ser-465/467 (By similarity). Interacts with PPM1A (By similarity). Interacts with TGF-beta (By similarity). Interacts with TGFBR1 (By similarity). Interacts with TGIF (By similarity). Interacts with SMAD3 and TRIM33 (By similarity). Interacts with ZNF580 (By similarity). Interacts with NEDD4L in response to TGF-beta (By similarity). Interacts with HGS (By similarity). Interacts with AIP1 (By similarity). Interacts with WWP1 (By similarity). Interacts with PML (By similarity). Interacts weakly with ZNF8 (By similarity). Interacts (when phosphorylated) with RNF111; RNF111 acts as an enhancer of the transcriptional responses by mediating ubiquitination and degradation of SMAD2 inhibitors (By similarity). Interacts with YAP1 (when phosphorylated at 'Ser-112') (By similarity). Interacts when phosphorylated with IPO7; the interaction facilitates translocation of SMAD2 to the nucleus (By similarity). Interacts with MTMR4; negatively regulates TGF-beta signaling through SMAD2 dephosphorylation and retention in endosomes (By similarity).</text>
</comment>
<comment type="interaction">
    <interactant intactId="EBI-7948047">
        <id>O70436</id>
    </interactant>
    <interactant intactId="EBI-7204362">
        <id>P47196</id>
        <label>Akt1</label>
    </interactant>
    <organismsDiffer>false</organismsDiffer>
    <experiments>2</experiments>
</comment>
<comment type="subcellular location">
    <subcellularLocation>
        <location evidence="2">Cytoplasm</location>
    </subcellularLocation>
    <subcellularLocation>
        <location evidence="2">Nucleus</location>
    </subcellularLocation>
    <text evidence="2 3">Cytoplasmic and nuclear in the absence of TGF-beta (By similarity). On TGF-beta stimulation, migrates to the nucleus when complexed with SMAD4 or with IPO7 (By similarity). On dephosphorylation by phosphatase PPM1A, released from the SMAD2/SMAD4 complex, and exported out of the nucleus by interaction with RANBP1 (By similarity). Localized mainly to the nucleus in the early stages of embryo development with expression becoming evident in the cytoplasm at the blastocyst and epiblast stages (By similarity).</text>
</comment>
<comment type="tissue specificity">
    <text evidence="7">Expressed in cardiomyocytes.</text>
</comment>
<comment type="PTM">
    <text evidence="2">In response to TGF-beta, phosphorylated on the C-terminal SXS motif by TGF-beta and activin type 1 receptor kinases, phosphorylation declines progressively in a KMT5A-dependent manner. Phosphorylation in this motif is required for interaction with a number of proteins including SMURF2, SNON and SMAD4 in response to TGF-beta. Dephosphorylated in this motif by PPM1A leading to disruption of the SMAD2/3-SMAD4 complex, nuclear export and termination of the TGF-beta signaling. In response to decorin, the naturally occurring inhibitor of TGF-beta signaling, phosphorylated on Ser-240 by CaMK2. Phosphorylated by MAPK3 upon EGF stimulation; which increases transcriptional activity and stability, and is blocked by calmodulin. Phosphorylated by PDPK1 (By similarity).</text>
</comment>
<comment type="PTM">
    <text evidence="2">Acetylated on Lys-19 by coactivators in response to TGF-beta signaling, which increases transcriptional activity.</text>
</comment>
<comment type="PTM">
    <text evidence="2 3">In response to TGF-beta, ubiquitinated by NEDD4L; which promotes its degradation. Monoubiquitinated, leading to prevent DNA-binding (By similarity). Deubiquitination by USP15 alleviates inhibition and promotes activation of TGF-beta target genes (By similarity). Ubiquitinated by RNF111, leading to its degradation: only SMAD2 proteins that are 'in use' are targeted by RNF111, RNF111 playing a key role in activating SMAD2 and regulating its turnover (By similarity).</text>
</comment>
<comment type="similarity">
    <text evidence="8">Belongs to the dwarfin/SMAD family.</text>
</comment>
<evidence type="ECO:0000250" key="1"/>
<evidence type="ECO:0000250" key="2">
    <source>
        <dbReference type="UniProtKB" id="Q15796"/>
    </source>
</evidence>
<evidence type="ECO:0000250" key="3">
    <source>
        <dbReference type="UniProtKB" id="Q62432"/>
    </source>
</evidence>
<evidence type="ECO:0000255" key="4">
    <source>
        <dbReference type="PROSITE-ProRule" id="PRU00438"/>
    </source>
</evidence>
<evidence type="ECO:0000255" key="5">
    <source>
        <dbReference type="PROSITE-ProRule" id="PRU00439"/>
    </source>
</evidence>
<evidence type="ECO:0000256" key="6">
    <source>
        <dbReference type="SAM" id="MobiDB-lite"/>
    </source>
</evidence>
<evidence type="ECO:0000269" key="7">
    <source>
    </source>
</evidence>
<evidence type="ECO:0000305" key="8"/>
<reference key="1">
    <citation type="journal article" date="1999" name="Diabetologia">
        <title>Involvement of Smad proteins in the differentiation of pancreatic AR42J cells induced by activin A.</title>
        <authorList>
            <person name="Zhang Y.-Q."/>
            <person name="Kanzaki M."/>
            <person name="Furukawa M."/>
            <person name="Shibata H."/>
            <person name="Ozeki M."/>
            <person name="Kojima I."/>
        </authorList>
    </citation>
    <scope>NUCLEOTIDE SEQUENCE [MRNA]</scope>
    <source>
        <strain>Sprague-Dawley</strain>
        <tissue>Brain</tissue>
    </source>
</reference>
<reference key="2">
    <citation type="journal article" date="1999" name="Endocr. J.">
        <title>cDNA cloning and chromosomal mapping of rat Smad2 and Smad4 and their expression in cultured rat articular chondrocytes.</title>
        <authorList>
            <person name="Osaki M."/>
            <person name="Tsukazaki T."/>
            <person name="Ono N."/>
            <person name="Yonekura A."/>
            <person name="Hirota Y."/>
            <person name="Miyazaki Y."/>
            <person name="Shindo H."/>
            <person name="Sonta S."/>
            <person name="Yamashita S."/>
        </authorList>
    </citation>
    <scope>NUCLEOTIDE SEQUENCE [MRNA]</scope>
</reference>
<reference key="3">
    <citation type="submission" date="1998-01" db="EMBL/GenBank/DDBJ databases">
        <title>Molecular cloning of rat Smad2 gene.</title>
        <authorList>
            <person name="Miyakita A."/>
            <person name="Okuno S."/>
            <person name="Watanabe T.K."/>
            <person name="Oga K."/>
            <person name="Tsuji A."/>
            <person name="Hishigaki H."/>
            <person name="Kato S."/>
            <person name="Sano A."/>
            <person name="Suto T."/>
            <person name="Nakagawa K."/>
            <person name="Nakahara Y."/>
            <person name="Haraguchi N."/>
            <person name="Higashi K."/>
        </authorList>
    </citation>
    <scope>NUCLEOTIDE SEQUENCE [MRNA]</scope>
    <source>
        <tissue>Testis</tissue>
    </source>
</reference>
<reference key="4">
    <citation type="journal article" date="2004" name="Genome Res.">
        <title>The status, quality, and expansion of the NIH full-length cDNA project: the Mammalian Gene Collection (MGC).</title>
        <authorList>
            <consortium name="The MGC Project Team"/>
        </authorList>
    </citation>
    <scope>NUCLEOTIDE SEQUENCE [LARGE SCALE MRNA]</scope>
    <source>
        <tissue>Brain</tissue>
    </source>
</reference>
<reference key="5">
    <citation type="journal article" date="2011" name="Mol. Cell. Biol.">
        <title>TSC-22 promotes transforming growth factor beta-mediated cardiac myofibroblast differentiation by antagonizing Smad7 activity.</title>
        <authorList>
            <person name="Yan X."/>
            <person name="Zhang J."/>
            <person name="Pan L."/>
            <person name="Wang P."/>
            <person name="Xue H."/>
            <person name="Zhang L."/>
            <person name="Gao X."/>
            <person name="Zhao X."/>
            <person name="Ning Y."/>
            <person name="Chen Y.G."/>
        </authorList>
    </citation>
    <scope>TISSUE SPECIFICITY</scope>
</reference>
<dbReference type="EMBL" id="AB017912">
    <property type="protein sequence ID" value="BAA33453.1"/>
    <property type="molecule type" value="mRNA"/>
</dbReference>
<dbReference type="EMBL" id="AF056001">
    <property type="protein sequence ID" value="AAC12780.1"/>
    <property type="molecule type" value="mRNA"/>
</dbReference>
<dbReference type="EMBL" id="AB010147">
    <property type="protein sequence ID" value="BAA81909.1"/>
    <property type="molecule type" value="mRNA"/>
</dbReference>
<dbReference type="EMBL" id="BC127497">
    <property type="protein sequence ID" value="AAI27498.1"/>
    <property type="molecule type" value="mRNA"/>
</dbReference>
<dbReference type="RefSeq" id="NP_001264379.1">
    <property type="nucleotide sequence ID" value="NM_001277450.1"/>
</dbReference>
<dbReference type="RefSeq" id="NP_062064.1">
    <property type="nucleotide sequence ID" value="NM_019191.2"/>
</dbReference>
<dbReference type="RefSeq" id="XP_063133349.1">
    <property type="nucleotide sequence ID" value="XM_063277279.1"/>
</dbReference>
<dbReference type="SMR" id="O70436"/>
<dbReference type="BioGRID" id="248011">
    <property type="interactions" value="2"/>
</dbReference>
<dbReference type="FunCoup" id="O70436">
    <property type="interactions" value="5554"/>
</dbReference>
<dbReference type="IntAct" id="O70436">
    <property type="interactions" value="1"/>
</dbReference>
<dbReference type="MINT" id="O70436"/>
<dbReference type="STRING" id="10116.ENSRNOP00000075341"/>
<dbReference type="ChEMBL" id="CHEMBL3784912"/>
<dbReference type="iPTMnet" id="O70436"/>
<dbReference type="PhosphoSitePlus" id="O70436"/>
<dbReference type="jPOST" id="O70436"/>
<dbReference type="PaxDb" id="10116-ENSRNOP00000048329"/>
<dbReference type="ABCD" id="O70436">
    <property type="antibodies" value="1 sequenced antibody"/>
</dbReference>
<dbReference type="Ensembl" id="ENSRNOT00000092173.2">
    <property type="protein sequence ID" value="ENSRNOP00000075341.1"/>
    <property type="gene ID" value="ENSRNOG00000018140.8"/>
</dbReference>
<dbReference type="GeneID" id="29357"/>
<dbReference type="KEGG" id="rno:29357"/>
<dbReference type="AGR" id="RGD:3031"/>
<dbReference type="CTD" id="4087"/>
<dbReference type="RGD" id="3031">
    <property type="gene designation" value="Smad2"/>
</dbReference>
<dbReference type="eggNOG" id="KOG3701">
    <property type="taxonomic scope" value="Eukaryota"/>
</dbReference>
<dbReference type="GeneTree" id="ENSGT00940000153499"/>
<dbReference type="HOGENOM" id="CLU_026736_0_2_1"/>
<dbReference type="InParanoid" id="O70436"/>
<dbReference type="OMA" id="PNTRCIT"/>
<dbReference type="OrthoDB" id="5794312at2759"/>
<dbReference type="PhylomeDB" id="O70436"/>
<dbReference type="TreeFam" id="TF314923"/>
<dbReference type="Reactome" id="R-RNO-1181150">
    <property type="pathway name" value="Signaling by NODAL"/>
</dbReference>
<dbReference type="Reactome" id="R-RNO-1502540">
    <property type="pathway name" value="Signaling by Activin"/>
</dbReference>
<dbReference type="Reactome" id="R-RNO-2173788">
    <property type="pathway name" value="Downregulation of TGF-beta receptor signaling"/>
</dbReference>
<dbReference type="Reactome" id="R-RNO-2173789">
    <property type="pathway name" value="TGF-beta receptor signaling activates SMADs"/>
</dbReference>
<dbReference type="Reactome" id="R-RNO-2173795">
    <property type="pathway name" value="Downregulation of SMAD2/3:SMAD4 transcriptional activity"/>
</dbReference>
<dbReference type="Reactome" id="R-RNO-2173796">
    <property type="pathway name" value="SMAD2/SMAD3:SMAD4 heterotrimer regulates transcription"/>
</dbReference>
<dbReference type="Reactome" id="R-RNO-5689880">
    <property type="pathway name" value="Ub-specific processing proteases"/>
</dbReference>
<dbReference type="Reactome" id="R-RNO-9617828">
    <property type="pathway name" value="FOXO-mediated transcription of cell cycle genes"/>
</dbReference>
<dbReference type="PRO" id="PR:O70436"/>
<dbReference type="Proteomes" id="UP000002494">
    <property type="component" value="Chromosome 18"/>
</dbReference>
<dbReference type="Bgee" id="ENSRNOG00000018140">
    <property type="expression patterns" value="Expressed in thymus and 19 other cell types or tissues"/>
</dbReference>
<dbReference type="ExpressionAtlas" id="O70436">
    <property type="expression patterns" value="baseline and differential"/>
</dbReference>
<dbReference type="GO" id="GO:0032444">
    <property type="term" value="C:activin responsive factor complex"/>
    <property type="evidence" value="ECO:0000266"/>
    <property type="project" value="RGD"/>
</dbReference>
<dbReference type="GO" id="GO:0000785">
    <property type="term" value="C:chromatin"/>
    <property type="evidence" value="ECO:0000266"/>
    <property type="project" value="RGD"/>
</dbReference>
<dbReference type="GO" id="GO:0005737">
    <property type="term" value="C:cytoplasm"/>
    <property type="evidence" value="ECO:0000250"/>
    <property type="project" value="UniProtKB"/>
</dbReference>
<dbReference type="GO" id="GO:0071144">
    <property type="term" value="C:heteromeric SMAD protein complex"/>
    <property type="evidence" value="ECO:0000266"/>
    <property type="project" value="RGD"/>
</dbReference>
<dbReference type="GO" id="GO:0071142">
    <property type="term" value="C:homomeric SMAD protein complex"/>
    <property type="evidence" value="ECO:0000266"/>
    <property type="project" value="RGD"/>
</dbReference>
<dbReference type="GO" id="GO:0005634">
    <property type="term" value="C:nucleus"/>
    <property type="evidence" value="ECO:0000250"/>
    <property type="project" value="UniProtKB"/>
</dbReference>
<dbReference type="GO" id="GO:0032991">
    <property type="term" value="C:protein-containing complex"/>
    <property type="evidence" value="ECO:0000314"/>
    <property type="project" value="RGD"/>
</dbReference>
<dbReference type="GO" id="GO:0071141">
    <property type="term" value="C:SMAD protein complex"/>
    <property type="evidence" value="ECO:0000266"/>
    <property type="project" value="RGD"/>
</dbReference>
<dbReference type="GO" id="GO:0005667">
    <property type="term" value="C:transcription regulator complex"/>
    <property type="evidence" value="ECO:0000250"/>
    <property type="project" value="UniProtKB"/>
</dbReference>
<dbReference type="GO" id="GO:0003682">
    <property type="term" value="F:chromatin binding"/>
    <property type="evidence" value="ECO:0000266"/>
    <property type="project" value="RGD"/>
</dbReference>
<dbReference type="GO" id="GO:0070410">
    <property type="term" value="F:co-SMAD binding"/>
    <property type="evidence" value="ECO:0000266"/>
    <property type="project" value="RGD"/>
</dbReference>
<dbReference type="GO" id="GO:0097718">
    <property type="term" value="F:disordered domain specific binding"/>
    <property type="evidence" value="ECO:0000266"/>
    <property type="project" value="RGD"/>
</dbReference>
<dbReference type="GO" id="GO:0003677">
    <property type="term" value="F:DNA binding"/>
    <property type="evidence" value="ECO:0000266"/>
    <property type="project" value="RGD"/>
</dbReference>
<dbReference type="GO" id="GO:0001228">
    <property type="term" value="F:DNA-binding transcription activator activity, RNA polymerase II-specific"/>
    <property type="evidence" value="ECO:0000266"/>
    <property type="project" value="RGD"/>
</dbReference>
<dbReference type="GO" id="GO:0003700">
    <property type="term" value="F:DNA-binding transcription factor activity"/>
    <property type="evidence" value="ECO:0000266"/>
    <property type="project" value="RGD"/>
</dbReference>
<dbReference type="GO" id="GO:0000981">
    <property type="term" value="F:DNA-binding transcription factor activity, RNA polymerase II-specific"/>
    <property type="evidence" value="ECO:0000318"/>
    <property type="project" value="GO_Central"/>
</dbReference>
<dbReference type="GO" id="GO:0140297">
    <property type="term" value="F:DNA-binding transcription factor binding"/>
    <property type="evidence" value="ECO:0000266"/>
    <property type="project" value="RGD"/>
</dbReference>
<dbReference type="GO" id="GO:0003690">
    <property type="term" value="F:double-stranded DNA binding"/>
    <property type="evidence" value="ECO:0000250"/>
    <property type="project" value="UniProtKB"/>
</dbReference>
<dbReference type="GO" id="GO:0070411">
    <property type="term" value="F:I-SMAD binding"/>
    <property type="evidence" value="ECO:0000266"/>
    <property type="project" value="RGD"/>
</dbReference>
<dbReference type="GO" id="GO:0042802">
    <property type="term" value="F:identical protein binding"/>
    <property type="evidence" value="ECO:0000266"/>
    <property type="project" value="RGD"/>
</dbReference>
<dbReference type="GO" id="GO:0046872">
    <property type="term" value="F:metal ion binding"/>
    <property type="evidence" value="ECO:0007669"/>
    <property type="project" value="UniProtKB-KW"/>
</dbReference>
<dbReference type="GO" id="GO:0019902">
    <property type="term" value="F:phosphatase binding"/>
    <property type="evidence" value="ECO:0000266"/>
    <property type="project" value="RGD"/>
</dbReference>
<dbReference type="GO" id="GO:0070412">
    <property type="term" value="F:R-SMAD binding"/>
    <property type="evidence" value="ECO:0000266"/>
    <property type="project" value="RGD"/>
</dbReference>
<dbReference type="GO" id="GO:0000978">
    <property type="term" value="F:RNA polymerase II cis-regulatory region sequence-specific DNA binding"/>
    <property type="evidence" value="ECO:0000266"/>
    <property type="project" value="RGD"/>
</dbReference>
<dbReference type="GO" id="GO:0061629">
    <property type="term" value="F:RNA polymerase II-specific DNA-binding transcription factor binding"/>
    <property type="evidence" value="ECO:0000250"/>
    <property type="project" value="UniProtKB"/>
</dbReference>
<dbReference type="GO" id="GO:0046332">
    <property type="term" value="F:SMAD binding"/>
    <property type="evidence" value="ECO:0000266"/>
    <property type="project" value="RGD"/>
</dbReference>
<dbReference type="GO" id="GO:0048156">
    <property type="term" value="F:tau protein binding"/>
    <property type="evidence" value="ECO:0000266"/>
    <property type="project" value="RGD"/>
</dbReference>
<dbReference type="GO" id="GO:0005160">
    <property type="term" value="F:transforming growth factor beta receptor binding"/>
    <property type="evidence" value="ECO:0000266"/>
    <property type="project" value="RGD"/>
</dbReference>
<dbReference type="GO" id="GO:0034713">
    <property type="term" value="F:type I transforming growth factor beta receptor binding"/>
    <property type="evidence" value="ECO:0000266"/>
    <property type="project" value="RGD"/>
</dbReference>
<dbReference type="GO" id="GO:0031625">
    <property type="term" value="F:ubiquitin protein ligase binding"/>
    <property type="evidence" value="ECO:0000266"/>
    <property type="project" value="RGD"/>
</dbReference>
<dbReference type="GO" id="GO:0032924">
    <property type="term" value="P:activin receptor signaling pathway"/>
    <property type="evidence" value="ECO:0000266"/>
    <property type="project" value="RGD"/>
</dbReference>
<dbReference type="GO" id="GO:0030325">
    <property type="term" value="P:adrenal gland development"/>
    <property type="evidence" value="ECO:0000314"/>
    <property type="project" value="RGD"/>
</dbReference>
<dbReference type="GO" id="GO:0009653">
    <property type="term" value="P:anatomical structure morphogenesis"/>
    <property type="evidence" value="ECO:0000318"/>
    <property type="project" value="GO_Central"/>
</dbReference>
<dbReference type="GO" id="GO:0009952">
    <property type="term" value="P:anterior/posterior pattern specification"/>
    <property type="evidence" value="ECO:0000250"/>
    <property type="project" value="UniProtKB"/>
</dbReference>
<dbReference type="GO" id="GO:0003180">
    <property type="term" value="P:aortic valve morphogenesis"/>
    <property type="evidence" value="ECO:0000266"/>
    <property type="project" value="RGD"/>
</dbReference>
<dbReference type="GO" id="GO:0030154">
    <property type="term" value="P:cell differentiation"/>
    <property type="evidence" value="ECO:0000318"/>
    <property type="project" value="GO_Central"/>
</dbReference>
<dbReference type="GO" id="GO:0045165">
    <property type="term" value="P:cell fate commitment"/>
    <property type="evidence" value="ECO:0000250"/>
    <property type="project" value="UniProtKB"/>
</dbReference>
<dbReference type="GO" id="GO:0008283">
    <property type="term" value="P:cell population proliferation"/>
    <property type="evidence" value="ECO:0000266"/>
    <property type="project" value="RGD"/>
</dbReference>
<dbReference type="GO" id="GO:0071333">
    <property type="term" value="P:cellular response to glucose stimulus"/>
    <property type="evidence" value="ECO:0000270"/>
    <property type="project" value="RGD"/>
</dbReference>
<dbReference type="GO" id="GO:0071560">
    <property type="term" value="P:cellular response to transforming growth factor beta stimulus"/>
    <property type="evidence" value="ECO:0000270"/>
    <property type="project" value="RGD"/>
</dbReference>
<dbReference type="GO" id="GO:0003140">
    <property type="term" value="P:determination of left/right asymmetry in lateral mesoderm"/>
    <property type="evidence" value="ECO:0000266"/>
    <property type="project" value="RGD"/>
</dbReference>
<dbReference type="GO" id="GO:0048589">
    <property type="term" value="P:developmental growth"/>
    <property type="evidence" value="ECO:0000266"/>
    <property type="project" value="RGD"/>
</dbReference>
<dbReference type="GO" id="GO:0048701">
    <property type="term" value="P:embryonic cranial skeleton morphogenesis"/>
    <property type="evidence" value="ECO:0000266"/>
    <property type="project" value="RGD"/>
</dbReference>
<dbReference type="GO" id="GO:0048617">
    <property type="term" value="P:embryonic foregut morphogenesis"/>
    <property type="evidence" value="ECO:0000266"/>
    <property type="project" value="RGD"/>
</dbReference>
<dbReference type="GO" id="GO:0009880">
    <property type="term" value="P:embryonic pattern specification"/>
    <property type="evidence" value="ECO:0000266"/>
    <property type="project" value="RGD"/>
</dbReference>
<dbReference type="GO" id="GO:0003203">
    <property type="term" value="P:endocardial cushion morphogenesis"/>
    <property type="evidence" value="ECO:0000266"/>
    <property type="project" value="RGD"/>
</dbReference>
<dbReference type="GO" id="GO:0007492">
    <property type="term" value="P:endoderm development"/>
    <property type="evidence" value="ECO:0000266"/>
    <property type="project" value="RGD"/>
</dbReference>
<dbReference type="GO" id="GO:0001706">
    <property type="term" value="P:endoderm formation"/>
    <property type="evidence" value="ECO:0000266"/>
    <property type="project" value="RGD"/>
</dbReference>
<dbReference type="GO" id="GO:0007369">
    <property type="term" value="P:gastrulation"/>
    <property type="evidence" value="ECO:0000266"/>
    <property type="project" value="RGD"/>
</dbReference>
<dbReference type="GO" id="GO:0007507">
    <property type="term" value="P:heart development"/>
    <property type="evidence" value="ECO:0000266"/>
    <property type="project" value="RGD"/>
</dbReference>
<dbReference type="GO" id="GO:0001701">
    <property type="term" value="P:in utero embryonic development"/>
    <property type="evidence" value="ECO:0000266"/>
    <property type="project" value="RGD"/>
</dbReference>
<dbReference type="GO" id="GO:0030073">
    <property type="term" value="P:insulin secretion"/>
    <property type="evidence" value="ECO:0000266"/>
    <property type="project" value="RGD"/>
</dbReference>
<dbReference type="GO" id="GO:0035556">
    <property type="term" value="P:intracellular signal transduction"/>
    <property type="evidence" value="ECO:0000250"/>
    <property type="project" value="UniProtKB"/>
</dbReference>
<dbReference type="GO" id="GO:0030324">
    <property type="term" value="P:lung development"/>
    <property type="evidence" value="ECO:0000266"/>
    <property type="project" value="RGD"/>
</dbReference>
<dbReference type="GO" id="GO:0001707">
    <property type="term" value="P:mesoderm formation"/>
    <property type="evidence" value="ECO:0000250"/>
    <property type="project" value="UniProtKB"/>
</dbReference>
<dbReference type="GO" id="GO:0008285">
    <property type="term" value="P:negative regulation of cell population proliferation"/>
    <property type="evidence" value="ECO:0000315"/>
    <property type="project" value="RGD"/>
</dbReference>
<dbReference type="GO" id="GO:0045892">
    <property type="term" value="P:negative regulation of DNA-templated transcription"/>
    <property type="evidence" value="ECO:0000266"/>
    <property type="project" value="RGD"/>
</dbReference>
<dbReference type="GO" id="GO:0010629">
    <property type="term" value="P:negative regulation of gene expression"/>
    <property type="evidence" value="ECO:0000266"/>
    <property type="project" value="RGD"/>
</dbReference>
<dbReference type="GO" id="GO:0030279">
    <property type="term" value="P:negative regulation of ossification"/>
    <property type="evidence" value="ECO:0000266"/>
    <property type="project" value="RGD"/>
</dbReference>
<dbReference type="GO" id="GO:0038092">
    <property type="term" value="P:nodal signaling pathway"/>
    <property type="evidence" value="ECO:0000266"/>
    <property type="project" value="RGD"/>
</dbReference>
<dbReference type="GO" id="GO:0071895">
    <property type="term" value="P:odontoblast differentiation"/>
    <property type="evidence" value="ECO:0000250"/>
    <property type="project" value="UniProtKB"/>
</dbReference>
<dbReference type="GO" id="GO:0035265">
    <property type="term" value="P:organ growth"/>
    <property type="evidence" value="ECO:0000266"/>
    <property type="project" value="RGD"/>
</dbReference>
<dbReference type="GO" id="GO:0031016">
    <property type="term" value="P:pancreas development"/>
    <property type="evidence" value="ECO:0000266"/>
    <property type="project" value="RGD"/>
</dbReference>
<dbReference type="GO" id="GO:0048340">
    <property type="term" value="P:paraxial mesoderm morphogenesis"/>
    <property type="evidence" value="ECO:0000250"/>
    <property type="project" value="UniProtKB"/>
</dbReference>
<dbReference type="GO" id="GO:0007389">
    <property type="term" value="P:pattern specification process"/>
    <property type="evidence" value="ECO:0000266"/>
    <property type="project" value="RGD"/>
</dbReference>
<dbReference type="GO" id="GO:0060039">
    <property type="term" value="P:pericardium development"/>
    <property type="evidence" value="ECO:0000266"/>
    <property type="project" value="RGD"/>
</dbReference>
<dbReference type="GO" id="GO:0030513">
    <property type="term" value="P:positive regulation of BMP signaling pathway"/>
    <property type="evidence" value="ECO:0000266"/>
    <property type="project" value="RGD"/>
</dbReference>
<dbReference type="GO" id="GO:0045893">
    <property type="term" value="P:positive regulation of DNA-templated transcription"/>
    <property type="evidence" value="ECO:0000250"/>
    <property type="project" value="UniProtKB"/>
</dbReference>
<dbReference type="GO" id="GO:0010718">
    <property type="term" value="P:positive regulation of epithelial to mesenchymal transition"/>
    <property type="evidence" value="ECO:0000266"/>
    <property type="project" value="RGD"/>
</dbReference>
<dbReference type="GO" id="GO:0010628">
    <property type="term" value="P:positive regulation of gene expression"/>
    <property type="evidence" value="ECO:0000266"/>
    <property type="project" value="RGD"/>
</dbReference>
<dbReference type="GO" id="GO:0045944">
    <property type="term" value="P:positive regulation of transcription by RNA polymerase II"/>
    <property type="evidence" value="ECO:0000315"/>
    <property type="project" value="BHF-UCL"/>
</dbReference>
<dbReference type="GO" id="GO:0009791">
    <property type="term" value="P:post-embryonic development"/>
    <property type="evidence" value="ECO:0000266"/>
    <property type="project" value="RGD"/>
</dbReference>
<dbReference type="GO" id="GO:0003184">
    <property type="term" value="P:pulmonary valve morphogenesis"/>
    <property type="evidence" value="ECO:0000266"/>
    <property type="project" value="RGD"/>
</dbReference>
<dbReference type="GO" id="GO:0017015">
    <property type="term" value="P:regulation of transforming growth factor beta receptor signaling pathway"/>
    <property type="evidence" value="ECO:0000266"/>
    <property type="project" value="RGD"/>
</dbReference>
<dbReference type="GO" id="GO:0070723">
    <property type="term" value="P:response to cholesterol"/>
    <property type="evidence" value="ECO:0000266"/>
    <property type="project" value="RGD"/>
</dbReference>
<dbReference type="GO" id="GO:0009749">
    <property type="term" value="P:response to glucose"/>
    <property type="evidence" value="ECO:0000266"/>
    <property type="project" value="RGD"/>
</dbReference>
<dbReference type="GO" id="GO:0071559">
    <property type="term" value="P:response to transforming growth factor beta"/>
    <property type="evidence" value="ECO:0000266"/>
    <property type="project" value="RGD"/>
</dbReference>
<dbReference type="GO" id="GO:0062009">
    <property type="term" value="P:secondary palate development"/>
    <property type="evidence" value="ECO:0000266"/>
    <property type="project" value="RGD"/>
</dbReference>
<dbReference type="GO" id="GO:0023019">
    <property type="term" value="P:signal transduction involved in regulation of gene expression"/>
    <property type="evidence" value="ECO:0000315"/>
    <property type="project" value="BHF-UCL"/>
</dbReference>
<dbReference type="GO" id="GO:0060395">
    <property type="term" value="P:SMAD protein signal transduction"/>
    <property type="evidence" value="ECO:0000315"/>
    <property type="project" value="BHF-UCL"/>
</dbReference>
<dbReference type="GO" id="GO:0007179">
    <property type="term" value="P:transforming growth factor beta receptor signaling pathway"/>
    <property type="evidence" value="ECO:0000315"/>
    <property type="project" value="BHF-UCL"/>
</dbReference>
<dbReference type="GO" id="GO:0061450">
    <property type="term" value="P:trophoblast cell migration"/>
    <property type="evidence" value="ECO:0000266"/>
    <property type="project" value="RGD"/>
</dbReference>
<dbReference type="GO" id="GO:0001657">
    <property type="term" value="P:ureteric bud development"/>
    <property type="evidence" value="ECO:0000266"/>
    <property type="project" value="RGD"/>
</dbReference>
<dbReference type="GO" id="GO:0007352">
    <property type="term" value="P:zygotic specification of dorsal/ventral axis"/>
    <property type="evidence" value="ECO:0000266"/>
    <property type="project" value="RGD"/>
</dbReference>
<dbReference type="CDD" id="cd10985">
    <property type="entry name" value="MH2_SMAD_2_3"/>
    <property type="match status" value="1"/>
</dbReference>
<dbReference type="FunFam" id="2.60.200.10:FF:000001">
    <property type="entry name" value="Mothers against decapentaplegic homolog"/>
    <property type="match status" value="1"/>
</dbReference>
<dbReference type="Gene3D" id="2.60.200.10">
    <property type="match status" value="1"/>
</dbReference>
<dbReference type="Gene3D" id="3.90.520.10">
    <property type="entry name" value="SMAD MH1 domain"/>
    <property type="match status" value="1"/>
</dbReference>
<dbReference type="InterPro" id="IPR013790">
    <property type="entry name" value="Dwarfin"/>
</dbReference>
<dbReference type="InterPro" id="IPR003619">
    <property type="entry name" value="MAD_homology1_Dwarfin-type"/>
</dbReference>
<dbReference type="InterPro" id="IPR013019">
    <property type="entry name" value="MAD_homology_MH1"/>
</dbReference>
<dbReference type="InterPro" id="IPR017855">
    <property type="entry name" value="SMAD-like_dom_sf"/>
</dbReference>
<dbReference type="InterPro" id="IPR001132">
    <property type="entry name" value="SMAD_dom_Dwarfin-type"/>
</dbReference>
<dbReference type="InterPro" id="IPR008984">
    <property type="entry name" value="SMAD_FHA_dom_sf"/>
</dbReference>
<dbReference type="InterPro" id="IPR036578">
    <property type="entry name" value="SMAD_MH1_sf"/>
</dbReference>
<dbReference type="PANTHER" id="PTHR13703:SF42">
    <property type="entry name" value="MOTHERS AGAINST DECAPENTAPLEGIC HOMOLOG 2"/>
    <property type="match status" value="1"/>
</dbReference>
<dbReference type="PANTHER" id="PTHR13703">
    <property type="entry name" value="SMAD"/>
    <property type="match status" value="1"/>
</dbReference>
<dbReference type="Pfam" id="PF03165">
    <property type="entry name" value="MH1"/>
    <property type="match status" value="1"/>
</dbReference>
<dbReference type="Pfam" id="PF03166">
    <property type="entry name" value="MH2"/>
    <property type="match status" value="1"/>
</dbReference>
<dbReference type="SMART" id="SM00523">
    <property type="entry name" value="DWA"/>
    <property type="match status" value="1"/>
</dbReference>
<dbReference type="SMART" id="SM00524">
    <property type="entry name" value="DWB"/>
    <property type="match status" value="1"/>
</dbReference>
<dbReference type="SUPFAM" id="SSF56366">
    <property type="entry name" value="SMAD MH1 domain"/>
    <property type="match status" value="1"/>
</dbReference>
<dbReference type="SUPFAM" id="SSF49879">
    <property type="entry name" value="SMAD/FHA domain"/>
    <property type="match status" value="1"/>
</dbReference>
<dbReference type="PROSITE" id="PS51075">
    <property type="entry name" value="MH1"/>
    <property type="match status" value="1"/>
</dbReference>
<dbReference type="PROSITE" id="PS51076">
    <property type="entry name" value="MH2"/>
    <property type="match status" value="1"/>
</dbReference>
<keyword id="KW-0007">Acetylation</keyword>
<keyword id="KW-0963">Cytoplasm</keyword>
<keyword id="KW-0238">DNA-binding</keyword>
<keyword id="KW-0479">Metal-binding</keyword>
<keyword id="KW-0539">Nucleus</keyword>
<keyword id="KW-0597">Phosphoprotein</keyword>
<keyword id="KW-1185">Reference proteome</keyword>
<keyword id="KW-0804">Transcription</keyword>
<keyword id="KW-0805">Transcription regulation</keyword>
<keyword id="KW-0832">Ubl conjugation</keyword>
<keyword id="KW-0862">Zinc</keyword>
<gene>
    <name type="primary">Smad2</name>
    <name type="synonym">Madh2</name>
</gene>
<accession>O70436</accession>
<accession>A0JPM1</accession>
<sequence>MSSILPFTPPVVKRLLGWKKSAGGSGGAGGGEQNGQEEKWCEKAVKSLVKKLKKTGRLDELEKAITTQNCNTKCVTIPSTCSEIWGLSTANTVDQWDTTGLYSFSEQTRSLDGRLQVSHRKGLPHVIYCRLWRWPDLHSHHELKAIENCEYAFSLKKDEVCVNPYHYQRVETPVLPPVLVPRHTEILTELPPLDDYTHSIPENTNFPAGIEPQSNYIPETPPPGYISEDGETSDQQLNQSMDTGSPAELSPTTLSPVNHSLDLQPVTYSEPAFWCSIAYYELNQRVGETFHASQPSLTVDGFTDPSNSERFCLGLLSNVNRNATVEMTRRHIGRGVRLYYIGGEVFAECLSDSAIFVQSPNCNQRYGWHPATVCKIPPGCNLKIFNNQEFAALLAQSVNQGFEAVYQLTRMCTIRMSFVKGWGAEYRRQTVTSTPCWIELHLNGPLQWLDKVLTQMGSPSVRCSSMS</sequence>
<organism>
    <name type="scientific">Rattus norvegicus</name>
    <name type="common">Rat</name>
    <dbReference type="NCBI Taxonomy" id="10116"/>
    <lineage>
        <taxon>Eukaryota</taxon>
        <taxon>Metazoa</taxon>
        <taxon>Chordata</taxon>
        <taxon>Craniata</taxon>
        <taxon>Vertebrata</taxon>
        <taxon>Euteleostomi</taxon>
        <taxon>Mammalia</taxon>
        <taxon>Eutheria</taxon>
        <taxon>Euarchontoglires</taxon>
        <taxon>Glires</taxon>
        <taxon>Rodentia</taxon>
        <taxon>Myomorpha</taxon>
        <taxon>Muroidea</taxon>
        <taxon>Muridae</taxon>
        <taxon>Murinae</taxon>
        <taxon>Rattus</taxon>
    </lineage>
</organism>
<proteinExistence type="evidence at protein level"/>
<name>SMAD2_RAT</name>